<reference key="1">
    <citation type="journal article" date="2008" name="J. Bacteriol.">
        <title>The genome of Heliobacterium modesticaldum, a phototrophic representative of the Firmicutes containing the simplest photosynthetic apparatus.</title>
        <authorList>
            <person name="Sattley W.M."/>
            <person name="Madigan M.T."/>
            <person name="Swingley W.D."/>
            <person name="Cheung P.C."/>
            <person name="Clocksin K.M."/>
            <person name="Conrad A.L."/>
            <person name="Dejesa L.C."/>
            <person name="Honchak B.M."/>
            <person name="Jung D.O."/>
            <person name="Karbach L.E."/>
            <person name="Kurdoglu A."/>
            <person name="Lahiri S."/>
            <person name="Mastrian S.D."/>
            <person name="Page L.E."/>
            <person name="Taylor H.L."/>
            <person name="Wang Z.T."/>
            <person name="Raymond J."/>
            <person name="Chen M."/>
            <person name="Blankenship R.E."/>
            <person name="Touchman J.W."/>
        </authorList>
    </citation>
    <scope>NUCLEOTIDE SEQUENCE [LARGE SCALE GENOMIC DNA]</scope>
    <source>
        <strain>ATCC 51547 / Ice1</strain>
    </source>
</reference>
<gene>
    <name evidence="1" type="primary">rpsF</name>
    <name type="ordered locus">Helmi_16420</name>
    <name type="ORF">HM1_1697</name>
</gene>
<sequence length="96" mass="11328">MREYEAVVLVRPNLEEEALQGVIDKFVNLVPQQGGEVVKVDKWGKRRLQYEVKKFKEAFYFLLNFKGEPAVAQELERVMKISDDIIRFLVVRKDEQ</sequence>
<feature type="chain" id="PRO_1000120759" description="Small ribosomal subunit protein bS6">
    <location>
        <begin position="1"/>
        <end position="96"/>
    </location>
</feature>
<evidence type="ECO:0000255" key="1">
    <source>
        <dbReference type="HAMAP-Rule" id="MF_00360"/>
    </source>
</evidence>
<evidence type="ECO:0000305" key="2"/>
<dbReference type="EMBL" id="CP000930">
    <property type="protein sequence ID" value="ABZ84267.1"/>
    <property type="molecule type" value="Genomic_DNA"/>
</dbReference>
<dbReference type="RefSeq" id="WP_012282772.1">
    <property type="nucleotide sequence ID" value="NC_010337.2"/>
</dbReference>
<dbReference type="SMR" id="B0TE72"/>
<dbReference type="STRING" id="498761.HM1_1697"/>
<dbReference type="KEGG" id="hmo:HM1_1697"/>
<dbReference type="eggNOG" id="COG0360">
    <property type="taxonomic scope" value="Bacteria"/>
</dbReference>
<dbReference type="HOGENOM" id="CLU_113441_5_3_9"/>
<dbReference type="OrthoDB" id="9812702at2"/>
<dbReference type="Proteomes" id="UP000008550">
    <property type="component" value="Chromosome"/>
</dbReference>
<dbReference type="GO" id="GO:0005737">
    <property type="term" value="C:cytoplasm"/>
    <property type="evidence" value="ECO:0007669"/>
    <property type="project" value="UniProtKB-ARBA"/>
</dbReference>
<dbReference type="GO" id="GO:1990904">
    <property type="term" value="C:ribonucleoprotein complex"/>
    <property type="evidence" value="ECO:0007669"/>
    <property type="project" value="UniProtKB-KW"/>
</dbReference>
<dbReference type="GO" id="GO:0005840">
    <property type="term" value="C:ribosome"/>
    <property type="evidence" value="ECO:0007669"/>
    <property type="project" value="UniProtKB-KW"/>
</dbReference>
<dbReference type="GO" id="GO:0070181">
    <property type="term" value="F:small ribosomal subunit rRNA binding"/>
    <property type="evidence" value="ECO:0007669"/>
    <property type="project" value="TreeGrafter"/>
</dbReference>
<dbReference type="GO" id="GO:0003735">
    <property type="term" value="F:structural constituent of ribosome"/>
    <property type="evidence" value="ECO:0007669"/>
    <property type="project" value="InterPro"/>
</dbReference>
<dbReference type="GO" id="GO:0006412">
    <property type="term" value="P:translation"/>
    <property type="evidence" value="ECO:0007669"/>
    <property type="project" value="UniProtKB-UniRule"/>
</dbReference>
<dbReference type="CDD" id="cd00473">
    <property type="entry name" value="bS6"/>
    <property type="match status" value="1"/>
</dbReference>
<dbReference type="FunFam" id="3.30.70.60:FF:000002">
    <property type="entry name" value="30S ribosomal protein S6"/>
    <property type="match status" value="1"/>
</dbReference>
<dbReference type="Gene3D" id="3.30.70.60">
    <property type="match status" value="1"/>
</dbReference>
<dbReference type="HAMAP" id="MF_00360">
    <property type="entry name" value="Ribosomal_bS6"/>
    <property type="match status" value="1"/>
</dbReference>
<dbReference type="InterPro" id="IPR000529">
    <property type="entry name" value="Ribosomal_bS6"/>
</dbReference>
<dbReference type="InterPro" id="IPR035980">
    <property type="entry name" value="Ribosomal_bS6_sf"/>
</dbReference>
<dbReference type="InterPro" id="IPR020814">
    <property type="entry name" value="Ribosomal_S6_plastid/chlpt"/>
</dbReference>
<dbReference type="InterPro" id="IPR014717">
    <property type="entry name" value="Transl_elong_EF1B/ribsomal_bS6"/>
</dbReference>
<dbReference type="NCBIfam" id="TIGR00166">
    <property type="entry name" value="S6"/>
    <property type="match status" value="1"/>
</dbReference>
<dbReference type="PANTHER" id="PTHR21011">
    <property type="entry name" value="MITOCHONDRIAL 28S RIBOSOMAL PROTEIN S6"/>
    <property type="match status" value="1"/>
</dbReference>
<dbReference type="PANTHER" id="PTHR21011:SF1">
    <property type="entry name" value="SMALL RIBOSOMAL SUBUNIT PROTEIN BS6M"/>
    <property type="match status" value="1"/>
</dbReference>
<dbReference type="Pfam" id="PF01250">
    <property type="entry name" value="Ribosomal_S6"/>
    <property type="match status" value="1"/>
</dbReference>
<dbReference type="SUPFAM" id="SSF54995">
    <property type="entry name" value="Ribosomal protein S6"/>
    <property type="match status" value="1"/>
</dbReference>
<keyword id="KW-1185">Reference proteome</keyword>
<keyword id="KW-0687">Ribonucleoprotein</keyword>
<keyword id="KW-0689">Ribosomal protein</keyword>
<keyword id="KW-0694">RNA-binding</keyword>
<keyword id="KW-0699">rRNA-binding</keyword>
<proteinExistence type="inferred from homology"/>
<name>RS6_HELMI</name>
<protein>
    <recommendedName>
        <fullName evidence="1">Small ribosomal subunit protein bS6</fullName>
    </recommendedName>
    <alternativeName>
        <fullName evidence="2">30S ribosomal protein S6</fullName>
    </alternativeName>
</protein>
<accession>B0TE72</accession>
<organism>
    <name type="scientific">Heliobacterium modesticaldum (strain ATCC 51547 / Ice1)</name>
    <dbReference type="NCBI Taxonomy" id="498761"/>
    <lineage>
        <taxon>Bacteria</taxon>
        <taxon>Bacillati</taxon>
        <taxon>Bacillota</taxon>
        <taxon>Clostridia</taxon>
        <taxon>Eubacteriales</taxon>
        <taxon>Heliobacteriaceae</taxon>
        <taxon>Heliomicrobium</taxon>
    </lineage>
</organism>
<comment type="function">
    <text evidence="1">Binds together with bS18 to 16S ribosomal RNA.</text>
</comment>
<comment type="similarity">
    <text evidence="1">Belongs to the bacterial ribosomal protein bS6 family.</text>
</comment>